<reference key="1">
    <citation type="journal article" date="2010" name="J. Proteome Res.">
        <title>Molecular diversification of peptide toxins from the tarantula Haplopelma hainanum (Ornithoctonus hainana) venom based on transcriptomic, peptidomic, and genomic analyses.</title>
        <authorList>
            <person name="Tang X."/>
            <person name="Zhang Y."/>
            <person name="Hu W."/>
            <person name="Xu D."/>
            <person name="Tao H."/>
            <person name="Yang X."/>
            <person name="Li Y."/>
            <person name="Jiang L."/>
            <person name="Liang S."/>
        </authorList>
    </citation>
    <scope>NUCLEOTIDE SEQUENCE [LARGE SCALE MRNA]</scope>
    <source>
        <tissue>Venom gland</tissue>
    </source>
</reference>
<keyword id="KW-1015">Disulfide bond</keyword>
<keyword id="KW-0646">Protease inhibitor</keyword>
<keyword id="KW-0964">Secreted</keyword>
<keyword id="KW-0722">Serine protease inhibitor</keyword>
<keyword id="KW-0732">Signal</keyword>
<dbReference type="EMBL" id="GU293037">
    <property type="protein sequence ID" value="ADB56853.1"/>
    <property type="molecule type" value="mRNA"/>
</dbReference>
<dbReference type="SMR" id="D2Y2G0"/>
<dbReference type="ArachnoServer" id="AS001938">
    <property type="toxin name" value="U15-theraphotoxin-Hhn1i"/>
</dbReference>
<dbReference type="GO" id="GO:0005576">
    <property type="term" value="C:extracellular region"/>
    <property type="evidence" value="ECO:0007669"/>
    <property type="project" value="UniProtKB-SubCell"/>
</dbReference>
<dbReference type="GO" id="GO:0015459">
    <property type="term" value="F:potassium channel regulator activity"/>
    <property type="evidence" value="ECO:0007669"/>
    <property type="project" value="UniProtKB-KW"/>
</dbReference>
<dbReference type="GO" id="GO:0004867">
    <property type="term" value="F:serine-type endopeptidase inhibitor activity"/>
    <property type="evidence" value="ECO:0007669"/>
    <property type="project" value="UniProtKB-KW"/>
</dbReference>
<dbReference type="GO" id="GO:0090729">
    <property type="term" value="F:toxin activity"/>
    <property type="evidence" value="ECO:0007669"/>
    <property type="project" value="UniProtKB-KW"/>
</dbReference>
<dbReference type="GO" id="GO:0044562">
    <property type="term" value="P:envenomation resulting in negative regulation of voltage-gated potassium channel activity in another organism"/>
    <property type="evidence" value="ECO:0007669"/>
    <property type="project" value="UniProtKB-ARBA"/>
</dbReference>
<dbReference type="CDD" id="cd22598">
    <property type="entry name" value="Kunitz_huwentoxin"/>
    <property type="match status" value="1"/>
</dbReference>
<dbReference type="FunFam" id="4.10.410.10:FF:000020">
    <property type="entry name" value="Collagen, type VI, alpha 3"/>
    <property type="match status" value="1"/>
</dbReference>
<dbReference type="Gene3D" id="4.10.410.10">
    <property type="entry name" value="Pancreatic trypsin inhibitor Kunitz domain"/>
    <property type="match status" value="1"/>
</dbReference>
<dbReference type="InterPro" id="IPR002223">
    <property type="entry name" value="Kunitz_BPTI"/>
</dbReference>
<dbReference type="InterPro" id="IPR036880">
    <property type="entry name" value="Kunitz_BPTI_sf"/>
</dbReference>
<dbReference type="InterPro" id="IPR051388">
    <property type="entry name" value="Serpin_venom_toxin"/>
</dbReference>
<dbReference type="PANTHER" id="PTHR46751">
    <property type="entry name" value="EPPIN"/>
    <property type="match status" value="1"/>
</dbReference>
<dbReference type="PANTHER" id="PTHR46751:SF1">
    <property type="entry name" value="WAP FOUR-DISULFIDE CORE DOMAIN PROTEIN 6A"/>
    <property type="match status" value="1"/>
</dbReference>
<dbReference type="Pfam" id="PF00014">
    <property type="entry name" value="Kunitz_BPTI"/>
    <property type="match status" value="1"/>
</dbReference>
<dbReference type="PRINTS" id="PR00759">
    <property type="entry name" value="BASICPTASE"/>
</dbReference>
<dbReference type="SMART" id="SM00131">
    <property type="entry name" value="KU"/>
    <property type="match status" value="1"/>
</dbReference>
<dbReference type="SUPFAM" id="SSF57362">
    <property type="entry name" value="BPTI-like"/>
    <property type="match status" value="1"/>
</dbReference>
<dbReference type="PROSITE" id="PS50279">
    <property type="entry name" value="BPTI_KUNITZ_2"/>
    <property type="match status" value="1"/>
</dbReference>
<proteinExistence type="inferred from homology"/>
<accession>D2Y2G0</accession>
<feature type="signal peptide" evidence="3">
    <location>
        <begin position="1"/>
        <end position="27"/>
    </location>
</feature>
<feature type="propeptide" id="PRO_0000400994" evidence="1">
    <location>
        <begin position="28"/>
        <end position="33"/>
    </location>
</feature>
<feature type="peptide" id="PRO_0000400995" description="Kunitz-type U15-theraphotoxin-Hhn1i">
    <location>
        <begin position="34"/>
        <end position="88"/>
    </location>
</feature>
<feature type="domain" description="BPTI/Kunitz inhibitor" evidence="4">
    <location>
        <begin position="37"/>
        <end position="85"/>
    </location>
</feature>
<feature type="site" description="Reactive bond for chymotrypsin" evidence="1">
    <location>
        <begin position="47"/>
        <end position="48"/>
    </location>
</feature>
<feature type="disulfide bond" evidence="4">
    <location>
        <begin position="37"/>
        <end position="85"/>
    </location>
</feature>
<feature type="disulfide bond" evidence="4">
    <location>
        <begin position="60"/>
        <end position="81"/>
    </location>
</feature>
<comment type="function">
    <text evidence="2">Serine protease inhibitor that inhibits trypsin at a molar ratio of 1:1.</text>
</comment>
<comment type="subcellular location">
    <subcellularLocation>
        <location evidence="6">Secreted</location>
    </subcellularLocation>
</comment>
<comment type="tissue specificity">
    <text evidence="6">Expressed by the venom gland.</text>
</comment>
<comment type="similarity">
    <text evidence="5">Belongs to the venom Kunitz-type family. 03 (sub-Kunitz) subfamily.</text>
</comment>
<organism>
    <name type="scientific">Cyriopagopus hainanus</name>
    <name type="common">Chinese bird spider</name>
    <name type="synonym">Haplopelma hainanum</name>
    <dbReference type="NCBI Taxonomy" id="209901"/>
    <lineage>
        <taxon>Eukaryota</taxon>
        <taxon>Metazoa</taxon>
        <taxon>Ecdysozoa</taxon>
        <taxon>Arthropoda</taxon>
        <taxon>Chelicerata</taxon>
        <taxon>Arachnida</taxon>
        <taxon>Araneae</taxon>
        <taxon>Mygalomorphae</taxon>
        <taxon>Theraphosidae</taxon>
        <taxon>Haplopelma</taxon>
    </lineage>
</organism>
<protein>
    <recommendedName>
        <fullName>Kunitz-type U15-theraphotoxin-Hhn1i</fullName>
        <shortName>U15-theraphotoxin-Hhn1i</shortName>
    </recommendedName>
    <alternativeName>
        <fullName>Kunitz-type serine protease inhibitor hainantoxin-XI-9</fullName>
        <shortName>HNTX-XI-9</shortName>
    </alternativeName>
</protein>
<evidence type="ECO:0000250" key="1"/>
<evidence type="ECO:0000250" key="2">
    <source>
        <dbReference type="UniProtKB" id="P68425"/>
    </source>
</evidence>
<evidence type="ECO:0000255" key="3"/>
<evidence type="ECO:0000255" key="4">
    <source>
        <dbReference type="PROSITE-ProRule" id="PRU00031"/>
    </source>
</evidence>
<evidence type="ECO:0000305" key="5"/>
<evidence type="ECO:0000305" key="6">
    <source>
    </source>
</evidence>
<sequence length="88" mass="9861">MGTARFLRAVLLLSVLLMVTFPALLSAEHHDGRVDICRLPSDSGDCLRFFEMRYFDGTTCTKFVYGGYGGNDNRFPTEKACMKRCAKA</sequence>
<name>VKTI1_CYRHA</name>